<name>TM143_MOUSE</name>
<protein>
    <recommendedName>
        <fullName>Transmembrane protein 143</fullName>
    </recommendedName>
</protein>
<comment type="subcellular location">
    <subcellularLocation>
        <location evidence="3">Membrane</location>
        <topology evidence="3">Multi-pass membrane protein</topology>
    </subcellularLocation>
</comment>
<comment type="alternative products">
    <event type="alternative splicing"/>
    <isoform>
        <id>Q8VD26-1</id>
        <name>1</name>
        <sequence type="displayed"/>
    </isoform>
    <isoform>
        <id>Q8VD26-2</id>
        <name>2</name>
        <sequence type="described" ref="VSP_024934 VSP_024935"/>
    </isoform>
    <isoform>
        <id>Q8VD26-3</id>
        <name>3</name>
        <sequence type="described" ref="VSP_024933 VSP_024936 VSP_024937"/>
    </isoform>
</comment>
<reference key="1">
    <citation type="journal article" date="2005" name="Science">
        <title>The transcriptional landscape of the mammalian genome.</title>
        <authorList>
            <person name="Carninci P."/>
            <person name="Kasukawa T."/>
            <person name="Katayama S."/>
            <person name="Gough J."/>
            <person name="Frith M.C."/>
            <person name="Maeda N."/>
            <person name="Oyama R."/>
            <person name="Ravasi T."/>
            <person name="Lenhard B."/>
            <person name="Wells C."/>
            <person name="Kodzius R."/>
            <person name="Shimokawa K."/>
            <person name="Bajic V.B."/>
            <person name="Brenner S.E."/>
            <person name="Batalov S."/>
            <person name="Forrest A.R."/>
            <person name="Zavolan M."/>
            <person name="Davis M.J."/>
            <person name="Wilming L.G."/>
            <person name="Aidinis V."/>
            <person name="Allen J.E."/>
            <person name="Ambesi-Impiombato A."/>
            <person name="Apweiler R."/>
            <person name="Aturaliya R.N."/>
            <person name="Bailey T.L."/>
            <person name="Bansal M."/>
            <person name="Baxter L."/>
            <person name="Beisel K.W."/>
            <person name="Bersano T."/>
            <person name="Bono H."/>
            <person name="Chalk A.M."/>
            <person name="Chiu K.P."/>
            <person name="Choudhary V."/>
            <person name="Christoffels A."/>
            <person name="Clutterbuck D.R."/>
            <person name="Crowe M.L."/>
            <person name="Dalla E."/>
            <person name="Dalrymple B.P."/>
            <person name="de Bono B."/>
            <person name="Della Gatta G."/>
            <person name="di Bernardo D."/>
            <person name="Down T."/>
            <person name="Engstrom P."/>
            <person name="Fagiolini M."/>
            <person name="Faulkner G."/>
            <person name="Fletcher C.F."/>
            <person name="Fukushima T."/>
            <person name="Furuno M."/>
            <person name="Futaki S."/>
            <person name="Gariboldi M."/>
            <person name="Georgii-Hemming P."/>
            <person name="Gingeras T.R."/>
            <person name="Gojobori T."/>
            <person name="Green R.E."/>
            <person name="Gustincich S."/>
            <person name="Harbers M."/>
            <person name="Hayashi Y."/>
            <person name="Hensch T.K."/>
            <person name="Hirokawa N."/>
            <person name="Hill D."/>
            <person name="Huminiecki L."/>
            <person name="Iacono M."/>
            <person name="Ikeo K."/>
            <person name="Iwama A."/>
            <person name="Ishikawa T."/>
            <person name="Jakt M."/>
            <person name="Kanapin A."/>
            <person name="Katoh M."/>
            <person name="Kawasawa Y."/>
            <person name="Kelso J."/>
            <person name="Kitamura H."/>
            <person name="Kitano H."/>
            <person name="Kollias G."/>
            <person name="Krishnan S.P."/>
            <person name="Kruger A."/>
            <person name="Kummerfeld S.K."/>
            <person name="Kurochkin I.V."/>
            <person name="Lareau L.F."/>
            <person name="Lazarevic D."/>
            <person name="Lipovich L."/>
            <person name="Liu J."/>
            <person name="Liuni S."/>
            <person name="McWilliam S."/>
            <person name="Madan Babu M."/>
            <person name="Madera M."/>
            <person name="Marchionni L."/>
            <person name="Matsuda H."/>
            <person name="Matsuzawa S."/>
            <person name="Miki H."/>
            <person name="Mignone F."/>
            <person name="Miyake S."/>
            <person name="Morris K."/>
            <person name="Mottagui-Tabar S."/>
            <person name="Mulder N."/>
            <person name="Nakano N."/>
            <person name="Nakauchi H."/>
            <person name="Ng P."/>
            <person name="Nilsson R."/>
            <person name="Nishiguchi S."/>
            <person name="Nishikawa S."/>
            <person name="Nori F."/>
            <person name="Ohara O."/>
            <person name="Okazaki Y."/>
            <person name="Orlando V."/>
            <person name="Pang K.C."/>
            <person name="Pavan W.J."/>
            <person name="Pavesi G."/>
            <person name="Pesole G."/>
            <person name="Petrovsky N."/>
            <person name="Piazza S."/>
            <person name="Reed J."/>
            <person name="Reid J.F."/>
            <person name="Ring B.Z."/>
            <person name="Ringwald M."/>
            <person name="Rost B."/>
            <person name="Ruan Y."/>
            <person name="Salzberg S.L."/>
            <person name="Sandelin A."/>
            <person name="Schneider C."/>
            <person name="Schoenbach C."/>
            <person name="Sekiguchi K."/>
            <person name="Semple C.A."/>
            <person name="Seno S."/>
            <person name="Sessa L."/>
            <person name="Sheng Y."/>
            <person name="Shibata Y."/>
            <person name="Shimada H."/>
            <person name="Shimada K."/>
            <person name="Silva D."/>
            <person name="Sinclair B."/>
            <person name="Sperling S."/>
            <person name="Stupka E."/>
            <person name="Sugiura K."/>
            <person name="Sultana R."/>
            <person name="Takenaka Y."/>
            <person name="Taki K."/>
            <person name="Tammoja K."/>
            <person name="Tan S.L."/>
            <person name="Tang S."/>
            <person name="Taylor M.S."/>
            <person name="Tegner J."/>
            <person name="Teichmann S.A."/>
            <person name="Ueda H.R."/>
            <person name="van Nimwegen E."/>
            <person name="Verardo R."/>
            <person name="Wei C.L."/>
            <person name="Yagi K."/>
            <person name="Yamanishi H."/>
            <person name="Zabarovsky E."/>
            <person name="Zhu S."/>
            <person name="Zimmer A."/>
            <person name="Hide W."/>
            <person name="Bult C."/>
            <person name="Grimmond S.M."/>
            <person name="Teasdale R.D."/>
            <person name="Liu E.T."/>
            <person name="Brusic V."/>
            <person name="Quackenbush J."/>
            <person name="Wahlestedt C."/>
            <person name="Mattick J.S."/>
            <person name="Hume D.A."/>
            <person name="Kai C."/>
            <person name="Sasaki D."/>
            <person name="Tomaru Y."/>
            <person name="Fukuda S."/>
            <person name="Kanamori-Katayama M."/>
            <person name="Suzuki M."/>
            <person name="Aoki J."/>
            <person name="Arakawa T."/>
            <person name="Iida J."/>
            <person name="Imamura K."/>
            <person name="Itoh M."/>
            <person name="Kato T."/>
            <person name="Kawaji H."/>
            <person name="Kawagashira N."/>
            <person name="Kawashima T."/>
            <person name="Kojima M."/>
            <person name="Kondo S."/>
            <person name="Konno H."/>
            <person name="Nakano K."/>
            <person name="Ninomiya N."/>
            <person name="Nishio T."/>
            <person name="Okada M."/>
            <person name="Plessy C."/>
            <person name="Shibata K."/>
            <person name="Shiraki T."/>
            <person name="Suzuki S."/>
            <person name="Tagami M."/>
            <person name="Waki K."/>
            <person name="Watahiki A."/>
            <person name="Okamura-Oho Y."/>
            <person name="Suzuki H."/>
            <person name="Kawai J."/>
            <person name="Hayashizaki Y."/>
        </authorList>
    </citation>
    <scope>NUCLEOTIDE SEQUENCE [LARGE SCALE MRNA] (ISOFORMS 2 AND 3)</scope>
    <source>
        <strain>C57BL/6J</strain>
        <tissue>Cerebellum</tissue>
        <tissue>Hypothalamus</tissue>
        <tissue>Oviduct</tissue>
    </source>
</reference>
<reference key="2">
    <citation type="journal article" date="2004" name="Genome Res.">
        <title>The status, quality, and expansion of the NIH full-length cDNA project: the Mammalian Gene Collection (MGC).</title>
        <authorList>
            <consortium name="The MGC Project Team"/>
        </authorList>
    </citation>
    <scope>NUCLEOTIDE SEQUENCE [LARGE SCALE MRNA] (ISOFORM 1)</scope>
    <source>
        <strain>FVB/N</strain>
        <tissue>Salivary gland</tissue>
    </source>
</reference>
<reference key="3">
    <citation type="journal article" date="2010" name="Cell">
        <title>A tissue-specific atlas of mouse protein phosphorylation and expression.</title>
        <authorList>
            <person name="Huttlin E.L."/>
            <person name="Jedrychowski M.P."/>
            <person name="Elias J.E."/>
            <person name="Goswami T."/>
            <person name="Rad R."/>
            <person name="Beausoleil S.A."/>
            <person name="Villen J."/>
            <person name="Haas W."/>
            <person name="Sowa M.E."/>
            <person name="Gygi S.P."/>
        </authorList>
    </citation>
    <scope>PHOSPHORYLATION [LARGE SCALE ANALYSIS] AT SER-329</scope>
    <scope>IDENTIFICATION BY MASS SPECTROMETRY [LARGE SCALE ANALYSIS]</scope>
    <source>
        <tissue>Brown adipose tissue</tissue>
        <tissue>Heart</tissue>
    </source>
</reference>
<organism>
    <name type="scientific">Mus musculus</name>
    <name type="common">Mouse</name>
    <dbReference type="NCBI Taxonomy" id="10090"/>
    <lineage>
        <taxon>Eukaryota</taxon>
        <taxon>Metazoa</taxon>
        <taxon>Chordata</taxon>
        <taxon>Craniata</taxon>
        <taxon>Vertebrata</taxon>
        <taxon>Euteleostomi</taxon>
        <taxon>Mammalia</taxon>
        <taxon>Eutheria</taxon>
        <taxon>Euarchontoglires</taxon>
        <taxon>Glires</taxon>
        <taxon>Rodentia</taxon>
        <taxon>Myomorpha</taxon>
        <taxon>Muroidea</taxon>
        <taxon>Muridae</taxon>
        <taxon>Murinae</taxon>
        <taxon>Mus</taxon>
        <taxon>Mus</taxon>
    </lineage>
</organism>
<accession>Q8VD26</accession>
<accession>Q8BHU3</accession>
<accession>Q8BI00</accession>
<accession>Q8BI09</accession>
<evidence type="ECO:0000255" key="1"/>
<evidence type="ECO:0000303" key="2">
    <source>
    </source>
</evidence>
<evidence type="ECO:0000305" key="3"/>
<evidence type="ECO:0007744" key="4">
    <source>
    </source>
</evidence>
<feature type="chain" id="PRO_0000285959" description="Transmembrane protein 143">
    <location>
        <begin position="1"/>
        <end position="458"/>
    </location>
</feature>
<feature type="transmembrane region" description="Helical" evidence="1">
    <location>
        <begin position="277"/>
        <end position="297"/>
    </location>
</feature>
<feature type="transmembrane region" description="Helical" evidence="1">
    <location>
        <begin position="298"/>
        <end position="318"/>
    </location>
</feature>
<feature type="modified residue" description="Phosphoserine" evidence="4">
    <location>
        <position position="329"/>
    </location>
</feature>
<feature type="splice variant" id="VSP_024933" description="In isoform 3." evidence="2">
    <location>
        <begin position="1"/>
        <end position="15"/>
    </location>
</feature>
<feature type="splice variant" id="VSP_024934" description="In isoform 2." evidence="2">
    <location>
        <begin position="1"/>
        <end position="5"/>
    </location>
</feature>
<feature type="splice variant" id="VSP_024935" description="In isoform 2." evidence="2">
    <original>WL</original>
    <variation>MF</variation>
    <location>
        <begin position="6"/>
        <end position="7"/>
    </location>
</feature>
<feature type="splice variant" id="VSP_024936" description="In isoform 3." evidence="2">
    <original>VTINLDQYIYIQFWALGQRVGQMPHKSSVGSKRGFFRKLPPVERRYFKRVVLAARTKGGHLVLKSFKDTP</original>
    <variation>EILQACGVGCPDERRAPGPEELQGYPAGGLRAAAAGAEGAHARAAARPAQPHVGGLRRHDLRQRGHGDTV</variation>
    <location>
        <begin position="186"/>
        <end position="255"/>
    </location>
</feature>
<feature type="splice variant" id="VSP_024937" description="In isoform 3." evidence="2">
    <location>
        <begin position="256"/>
        <end position="458"/>
    </location>
</feature>
<feature type="sequence conflict" description="In Ref. 1; BAC39951." evidence="3" ref="1">
    <original>G</original>
    <variation>S</variation>
    <location>
        <position position="294"/>
    </location>
</feature>
<feature type="sequence conflict" description="In Ref. 1; BAC30266/BAC39951." evidence="3" ref="1">
    <original>L</original>
    <variation>P</variation>
    <location>
        <position position="430"/>
    </location>
</feature>
<proteinExistence type="evidence at protein level"/>
<gene>
    <name type="primary">Tmem143</name>
</gene>
<dbReference type="EMBL" id="AK035836">
    <property type="protein sequence ID" value="BAC29207.1"/>
    <property type="molecule type" value="mRNA"/>
</dbReference>
<dbReference type="EMBL" id="AK039173">
    <property type="protein sequence ID" value="BAC30266.1"/>
    <property type="molecule type" value="mRNA"/>
</dbReference>
<dbReference type="EMBL" id="AK087636">
    <property type="protein sequence ID" value="BAC39951.1"/>
    <property type="molecule type" value="mRNA"/>
</dbReference>
<dbReference type="EMBL" id="BC017618">
    <property type="protein sequence ID" value="AAH17618.1"/>
    <property type="molecule type" value="mRNA"/>
</dbReference>
<dbReference type="CCDS" id="CCDS21269.1">
    <molecule id="Q8VD26-1"/>
</dbReference>
<dbReference type="RefSeq" id="NP_659050.2">
    <property type="nucleotide sequence ID" value="NM_144801.2"/>
</dbReference>
<dbReference type="FunCoup" id="Q8VD26">
    <property type="interactions" value="387"/>
</dbReference>
<dbReference type="STRING" id="10090.ENSMUSP00000070405"/>
<dbReference type="iPTMnet" id="Q8VD26"/>
<dbReference type="PhosphoSitePlus" id="Q8VD26"/>
<dbReference type="PaxDb" id="10090-ENSMUSP00000070405"/>
<dbReference type="PeptideAtlas" id="Q8VD26"/>
<dbReference type="ProteomicsDB" id="259530">
    <molecule id="Q8VD26-1"/>
</dbReference>
<dbReference type="ProteomicsDB" id="259531">
    <molecule id="Q8VD26-2"/>
</dbReference>
<dbReference type="ProteomicsDB" id="259532">
    <molecule id="Q8VD26-3"/>
</dbReference>
<dbReference type="Pumba" id="Q8VD26"/>
<dbReference type="GeneID" id="70209"/>
<dbReference type="KEGG" id="mmu:70209"/>
<dbReference type="AGR" id="MGI:1917459"/>
<dbReference type="CTD" id="55260"/>
<dbReference type="MGI" id="MGI:1917459">
    <property type="gene designation" value="Tmem143"/>
</dbReference>
<dbReference type="eggNOG" id="ENOG502QR4I">
    <property type="taxonomic scope" value="Eukaryota"/>
</dbReference>
<dbReference type="InParanoid" id="Q8VD26"/>
<dbReference type="OrthoDB" id="2020015at2759"/>
<dbReference type="PhylomeDB" id="Q8VD26"/>
<dbReference type="BioGRID-ORCS" id="70209">
    <property type="hits" value="0 hits in 76 CRISPR screens"/>
</dbReference>
<dbReference type="PRO" id="PR:Q8VD26"/>
<dbReference type="Proteomes" id="UP000000589">
    <property type="component" value="Unplaced"/>
</dbReference>
<dbReference type="RNAct" id="Q8VD26">
    <property type="molecule type" value="protein"/>
</dbReference>
<dbReference type="GO" id="GO:0016020">
    <property type="term" value="C:membrane"/>
    <property type="evidence" value="ECO:0007669"/>
    <property type="project" value="UniProtKB-SubCell"/>
</dbReference>
<dbReference type="GO" id="GO:0005739">
    <property type="term" value="C:mitochondrion"/>
    <property type="evidence" value="ECO:0007005"/>
    <property type="project" value="MGI"/>
</dbReference>
<dbReference type="GO" id="GO:0002244">
    <property type="term" value="P:hematopoietic progenitor cell differentiation"/>
    <property type="evidence" value="ECO:0000315"/>
    <property type="project" value="MGI"/>
</dbReference>
<dbReference type="InterPro" id="IPR022227">
    <property type="entry name" value="DUF3754"/>
</dbReference>
<dbReference type="PANTHER" id="PTHR16095:SF10">
    <property type="entry name" value="TRANSMEMBRANE PROTEIN 143"/>
    <property type="match status" value="1"/>
</dbReference>
<dbReference type="PANTHER" id="PTHR16095">
    <property type="entry name" value="TRANSMEMBRANE PROTEIN 143 FAMILY MEMBER"/>
    <property type="match status" value="1"/>
</dbReference>
<dbReference type="Pfam" id="PF12576">
    <property type="entry name" value="DUF3754"/>
    <property type="match status" value="1"/>
</dbReference>
<keyword id="KW-0025">Alternative splicing</keyword>
<keyword id="KW-0472">Membrane</keyword>
<keyword id="KW-0597">Phosphoprotein</keyword>
<keyword id="KW-1185">Reference proteome</keyword>
<keyword id="KW-0812">Transmembrane</keyword>
<keyword id="KW-1133">Transmembrane helix</keyword>
<sequence>MTVARWLRLWERGQAMLHVTWGSKVRLWSLVPALLGTPRALSSLENRMGVYRKMWNPKEPCDWAQQYRERFIPFSKEQLLRLLIQEFHSSPAERAALEAFSAHVDFCTLFHYHQLLARLQALYDPINPDRETLDQPSLTDPERLSSEKDVLQALRPLLAQANFSPLSEDALAYALVVHHPQDEVQVTINLDQYIYIQFWALGQRVGQMPHKSSVGSKRGFFRKLPPVERRYFKRVVLAARTKGGHLVLKSFKDTPLEGLEQLLPELKVRTPVLQRALLNLMLVVSGVMIFVNVGMVILSDLKMATSLLLLLFAAFMGVKASKVFGQRRSAQALELAHVLYYRSTSNNSELLSALALRAQEEHIKEALLAHSFLARRPGGSQGKPEETSRWLQSEVESWLLAQSGCDVTFNGPRALAHLQALTPSLGLFPLPELPQLDPMVLGTPEATQAALGSSYPSP</sequence>